<comment type="function">
    <text evidence="2">One of the essential components for the initiation of protein synthesis. Protects formylmethionyl-tRNA from spontaneous hydrolysis and promotes its binding to the 30S ribosomal subunits. Also involved in the hydrolysis of GTP during the formation of the 70S ribosomal complex.</text>
</comment>
<comment type="subcellular location">
    <subcellularLocation>
        <location evidence="2">Cytoplasm</location>
    </subcellularLocation>
</comment>
<comment type="similarity">
    <text evidence="2">Belongs to the TRAFAC class translation factor GTPase superfamily. Classic translation factor GTPase family. IF-2 subfamily.</text>
</comment>
<organism>
    <name type="scientific">Agrobacterium fabrum (strain C58 / ATCC 33970)</name>
    <name type="common">Agrobacterium tumefaciens (strain C58)</name>
    <dbReference type="NCBI Taxonomy" id="176299"/>
    <lineage>
        <taxon>Bacteria</taxon>
        <taxon>Pseudomonadati</taxon>
        <taxon>Pseudomonadota</taxon>
        <taxon>Alphaproteobacteria</taxon>
        <taxon>Hyphomicrobiales</taxon>
        <taxon>Rhizobiaceae</taxon>
        <taxon>Rhizobium/Agrobacterium group</taxon>
        <taxon>Agrobacterium</taxon>
        <taxon>Agrobacterium tumefaciens complex</taxon>
    </lineage>
</organism>
<accession>Q8UJ51</accession>
<keyword id="KW-0963">Cytoplasm</keyword>
<keyword id="KW-0342">GTP-binding</keyword>
<keyword id="KW-0396">Initiation factor</keyword>
<keyword id="KW-0547">Nucleotide-binding</keyword>
<keyword id="KW-0648">Protein biosynthesis</keyword>
<keyword id="KW-1185">Reference proteome</keyword>
<feature type="chain" id="PRO_0000137164" description="Translation initiation factor IF-2">
    <location>
        <begin position="1"/>
        <end position="913"/>
    </location>
</feature>
<feature type="domain" description="tr-type G">
    <location>
        <begin position="411"/>
        <end position="578"/>
    </location>
</feature>
<feature type="region of interest" description="Disordered" evidence="3">
    <location>
        <begin position="1"/>
        <end position="322"/>
    </location>
</feature>
<feature type="region of interest" description="G1" evidence="1">
    <location>
        <begin position="420"/>
        <end position="427"/>
    </location>
</feature>
<feature type="region of interest" description="G2" evidence="1">
    <location>
        <begin position="445"/>
        <end position="449"/>
    </location>
</feature>
<feature type="region of interest" description="G3" evidence="1">
    <location>
        <begin position="466"/>
        <end position="469"/>
    </location>
</feature>
<feature type="region of interest" description="G4" evidence="1">
    <location>
        <begin position="520"/>
        <end position="523"/>
    </location>
</feature>
<feature type="region of interest" description="G5" evidence="1">
    <location>
        <begin position="556"/>
        <end position="558"/>
    </location>
</feature>
<feature type="compositionally biased region" description="Low complexity" evidence="3">
    <location>
        <begin position="60"/>
        <end position="113"/>
    </location>
</feature>
<feature type="compositionally biased region" description="Basic and acidic residues" evidence="3">
    <location>
        <begin position="131"/>
        <end position="180"/>
    </location>
</feature>
<feature type="compositionally biased region" description="Low complexity" evidence="3">
    <location>
        <begin position="181"/>
        <end position="195"/>
    </location>
</feature>
<feature type="compositionally biased region" description="Low complexity" evidence="3">
    <location>
        <begin position="203"/>
        <end position="238"/>
    </location>
</feature>
<feature type="compositionally biased region" description="Low complexity" evidence="3">
    <location>
        <begin position="261"/>
        <end position="277"/>
    </location>
</feature>
<feature type="binding site" evidence="2">
    <location>
        <begin position="420"/>
        <end position="427"/>
    </location>
    <ligand>
        <name>GTP</name>
        <dbReference type="ChEBI" id="CHEBI:37565"/>
    </ligand>
</feature>
<feature type="binding site" evidence="2">
    <location>
        <begin position="466"/>
        <end position="470"/>
    </location>
    <ligand>
        <name>GTP</name>
        <dbReference type="ChEBI" id="CHEBI:37565"/>
    </ligand>
</feature>
<feature type="binding site" evidence="2">
    <location>
        <begin position="520"/>
        <end position="523"/>
    </location>
    <ligand>
        <name>GTP</name>
        <dbReference type="ChEBI" id="CHEBI:37565"/>
    </ligand>
</feature>
<reference key="1">
    <citation type="journal article" date="2001" name="Science">
        <title>The genome of the natural genetic engineer Agrobacterium tumefaciens C58.</title>
        <authorList>
            <person name="Wood D.W."/>
            <person name="Setubal J.C."/>
            <person name="Kaul R."/>
            <person name="Monks D.E."/>
            <person name="Kitajima J.P."/>
            <person name="Okura V.K."/>
            <person name="Zhou Y."/>
            <person name="Chen L."/>
            <person name="Wood G.E."/>
            <person name="Almeida N.F. Jr."/>
            <person name="Woo L."/>
            <person name="Chen Y."/>
            <person name="Paulsen I.T."/>
            <person name="Eisen J.A."/>
            <person name="Karp P.D."/>
            <person name="Bovee D. Sr."/>
            <person name="Chapman P."/>
            <person name="Clendenning J."/>
            <person name="Deatherage G."/>
            <person name="Gillet W."/>
            <person name="Grant C."/>
            <person name="Kutyavin T."/>
            <person name="Levy R."/>
            <person name="Li M.-J."/>
            <person name="McClelland E."/>
            <person name="Palmieri A."/>
            <person name="Raymond C."/>
            <person name="Rouse G."/>
            <person name="Saenphimmachak C."/>
            <person name="Wu Z."/>
            <person name="Romero P."/>
            <person name="Gordon D."/>
            <person name="Zhang S."/>
            <person name="Yoo H."/>
            <person name="Tao Y."/>
            <person name="Biddle P."/>
            <person name="Jung M."/>
            <person name="Krespan W."/>
            <person name="Perry M."/>
            <person name="Gordon-Kamm B."/>
            <person name="Liao L."/>
            <person name="Kim S."/>
            <person name="Hendrick C."/>
            <person name="Zhao Z.-Y."/>
            <person name="Dolan M."/>
            <person name="Chumley F."/>
            <person name="Tingey S.V."/>
            <person name="Tomb J.-F."/>
            <person name="Gordon M.P."/>
            <person name="Olson M.V."/>
            <person name="Nester E.W."/>
        </authorList>
    </citation>
    <scope>NUCLEOTIDE SEQUENCE [LARGE SCALE GENOMIC DNA]</scope>
    <source>
        <strain>C58 / ATCC 33970</strain>
    </source>
</reference>
<reference key="2">
    <citation type="journal article" date="2001" name="Science">
        <title>Genome sequence of the plant pathogen and biotechnology agent Agrobacterium tumefaciens C58.</title>
        <authorList>
            <person name="Goodner B."/>
            <person name="Hinkle G."/>
            <person name="Gattung S."/>
            <person name="Miller N."/>
            <person name="Blanchard M."/>
            <person name="Qurollo B."/>
            <person name="Goldman B.S."/>
            <person name="Cao Y."/>
            <person name="Askenazi M."/>
            <person name="Halling C."/>
            <person name="Mullin L."/>
            <person name="Houmiel K."/>
            <person name="Gordon J."/>
            <person name="Vaudin M."/>
            <person name="Iartchouk O."/>
            <person name="Epp A."/>
            <person name="Liu F."/>
            <person name="Wollam C."/>
            <person name="Allinger M."/>
            <person name="Doughty D."/>
            <person name="Scott C."/>
            <person name="Lappas C."/>
            <person name="Markelz B."/>
            <person name="Flanagan C."/>
            <person name="Crowell C."/>
            <person name="Gurson J."/>
            <person name="Lomo C."/>
            <person name="Sear C."/>
            <person name="Strub G."/>
            <person name="Cielo C."/>
            <person name="Slater S."/>
        </authorList>
    </citation>
    <scope>NUCLEOTIDE SEQUENCE [LARGE SCALE GENOMIC DNA]</scope>
    <source>
        <strain>C58 / ATCC 33970</strain>
    </source>
</reference>
<gene>
    <name evidence="2" type="primary">infB</name>
    <name type="ordered locus">Atu0087</name>
    <name type="ORF">AGR_C_131</name>
</gene>
<evidence type="ECO:0000250" key="1"/>
<evidence type="ECO:0000255" key="2">
    <source>
        <dbReference type="HAMAP-Rule" id="MF_00100"/>
    </source>
</evidence>
<evidence type="ECO:0000256" key="3">
    <source>
        <dbReference type="SAM" id="MobiDB-lite"/>
    </source>
</evidence>
<sequence length="913" mass="98822">MTDNNDDKTLNAPAKKTLTLKPGGMNQGTVRQDMGRGRTNAVVVETRKRRPHRPEDEKPVQPVVAAPKPAAPAPVAARPQAPQPRIHQPGGQQQRPGSSQSQQRSGSSAPQQRQADRPRGNVLHDLSAGEMEARRRALMEAQARDVVEAKQRAEDEARRKVEEEQRIAAEKMEAANRAAEEAAAAKVAASQPAAEVRAEPASERPAAAAAPAPRTDARPQSAAAAPRSAPATPDAAAPRGRRTGGDDEDDRGAVRRGSSLPARGKVVAPAPAKPAARLKTEEERRRGKLTVTSNLEEDGTPRGRSMASMRRRQEKFRRSQMQETREKVLREVILPETITIQELSQRMSERAVDVIKFLMKEGQMLKPGDVIDADLAELIAVEFGHTVKRVSESDVEEGIFNQTDDEGEMVSRPPVVTIMGHVDHGKTSLLDAIRQANVVSGEAGGITQHIGAYQVEKNGHKITFIDTPGHAAFTAMRARGAQATDIAVLVVAADDSVMPQTIESINHAKAAGVPIVVAINKIDKHEANPDKVRQQLLQHEVFVESMGGEVLDVEVSAKNKLNLDKLLEAILLQAEILDLKADPSRTAEGTVIEAELDRGRGAVATVLVQKGTLKPGQIIVAGDQWGRVRALVNDKGDHVKEAGPAMPVEILGLSGTPSAGDRFAVVENESRAREISEYRQRLARDKAVARQTGQRGSLEQMMSQLQTSGLKEFPLVIKADVQGSVEAIIASLDKLGTDEVRARVVHSGAGAITESDISLAEASNAAIIGFNVRANAQARTASERAGIEIRYYNIIYDLVDDVKAAMSGLLSPERRETFLGNAEILEVFNITKVGKVAGCRVVEGKVERGAGVRLVRDNVVIHEGKLKTLKRFKDEVNEVPVGQECGMAFENYEDIRAGDTIECFRVEHITRTL</sequence>
<name>IF2_AGRFC</name>
<protein>
    <recommendedName>
        <fullName evidence="2">Translation initiation factor IF-2</fullName>
    </recommendedName>
</protein>
<proteinExistence type="inferred from homology"/>
<dbReference type="EMBL" id="AE007869">
    <property type="protein sequence ID" value="AAK85907.1"/>
    <property type="molecule type" value="Genomic_DNA"/>
</dbReference>
<dbReference type="PIR" id="AB2587">
    <property type="entry name" value="AB2587"/>
</dbReference>
<dbReference type="PIR" id="B97369">
    <property type="entry name" value="B97369"/>
</dbReference>
<dbReference type="RefSeq" id="NP_353122.1">
    <property type="nucleotide sequence ID" value="NC_003062.2"/>
</dbReference>
<dbReference type="RefSeq" id="WP_010970645.1">
    <property type="nucleotide sequence ID" value="NC_003062.2"/>
</dbReference>
<dbReference type="SMR" id="Q8UJ51"/>
<dbReference type="STRING" id="176299.Atu0087"/>
<dbReference type="EnsemblBacteria" id="AAK85907">
    <property type="protein sequence ID" value="AAK85907"/>
    <property type="gene ID" value="Atu0087"/>
</dbReference>
<dbReference type="GeneID" id="1132125"/>
<dbReference type="KEGG" id="atu:Atu0087"/>
<dbReference type="PATRIC" id="fig|176299.10.peg.80"/>
<dbReference type="eggNOG" id="COG0532">
    <property type="taxonomic scope" value="Bacteria"/>
</dbReference>
<dbReference type="eggNOG" id="COG3064">
    <property type="taxonomic scope" value="Bacteria"/>
</dbReference>
<dbReference type="HOGENOM" id="CLU_006301_10_0_5"/>
<dbReference type="OrthoDB" id="9811804at2"/>
<dbReference type="PhylomeDB" id="Q8UJ51"/>
<dbReference type="BioCyc" id="AGRO:ATU0087-MONOMER"/>
<dbReference type="Proteomes" id="UP000000813">
    <property type="component" value="Chromosome circular"/>
</dbReference>
<dbReference type="GO" id="GO:0005829">
    <property type="term" value="C:cytosol"/>
    <property type="evidence" value="ECO:0007669"/>
    <property type="project" value="TreeGrafter"/>
</dbReference>
<dbReference type="GO" id="GO:0005525">
    <property type="term" value="F:GTP binding"/>
    <property type="evidence" value="ECO:0007669"/>
    <property type="project" value="UniProtKB-KW"/>
</dbReference>
<dbReference type="GO" id="GO:0003924">
    <property type="term" value="F:GTPase activity"/>
    <property type="evidence" value="ECO:0007669"/>
    <property type="project" value="UniProtKB-UniRule"/>
</dbReference>
<dbReference type="GO" id="GO:0097216">
    <property type="term" value="F:guanosine tetraphosphate binding"/>
    <property type="evidence" value="ECO:0007669"/>
    <property type="project" value="UniProtKB-ARBA"/>
</dbReference>
<dbReference type="GO" id="GO:0003743">
    <property type="term" value="F:translation initiation factor activity"/>
    <property type="evidence" value="ECO:0007669"/>
    <property type="project" value="UniProtKB-UniRule"/>
</dbReference>
<dbReference type="CDD" id="cd01887">
    <property type="entry name" value="IF2_eIF5B"/>
    <property type="match status" value="1"/>
</dbReference>
<dbReference type="CDD" id="cd03702">
    <property type="entry name" value="IF2_mtIF2_II"/>
    <property type="match status" value="1"/>
</dbReference>
<dbReference type="CDD" id="cd03692">
    <property type="entry name" value="mtIF2_IVc"/>
    <property type="match status" value="1"/>
</dbReference>
<dbReference type="FunFam" id="2.40.30.10:FF:000007">
    <property type="entry name" value="Translation initiation factor IF-2"/>
    <property type="match status" value="1"/>
</dbReference>
<dbReference type="FunFam" id="2.40.30.10:FF:000008">
    <property type="entry name" value="Translation initiation factor IF-2"/>
    <property type="match status" value="1"/>
</dbReference>
<dbReference type="FunFam" id="3.40.50.10050:FF:000001">
    <property type="entry name" value="Translation initiation factor IF-2"/>
    <property type="match status" value="1"/>
</dbReference>
<dbReference type="FunFam" id="3.40.50.300:FF:000019">
    <property type="entry name" value="Translation initiation factor IF-2"/>
    <property type="match status" value="1"/>
</dbReference>
<dbReference type="Gene3D" id="3.40.50.300">
    <property type="entry name" value="P-loop containing nucleotide triphosphate hydrolases"/>
    <property type="match status" value="1"/>
</dbReference>
<dbReference type="Gene3D" id="2.40.30.10">
    <property type="entry name" value="Translation factors"/>
    <property type="match status" value="2"/>
</dbReference>
<dbReference type="Gene3D" id="3.40.50.10050">
    <property type="entry name" value="Translation initiation factor IF- 2, domain 3"/>
    <property type="match status" value="1"/>
</dbReference>
<dbReference type="HAMAP" id="MF_00100_B">
    <property type="entry name" value="IF_2_B"/>
    <property type="match status" value="1"/>
</dbReference>
<dbReference type="InterPro" id="IPR053905">
    <property type="entry name" value="EF-G-like_DII"/>
</dbReference>
<dbReference type="InterPro" id="IPR004161">
    <property type="entry name" value="EFTu-like_2"/>
</dbReference>
<dbReference type="InterPro" id="IPR013575">
    <property type="entry name" value="IF2_assoc_dom_bac"/>
</dbReference>
<dbReference type="InterPro" id="IPR044145">
    <property type="entry name" value="IF2_II"/>
</dbReference>
<dbReference type="InterPro" id="IPR006847">
    <property type="entry name" value="IF2_N"/>
</dbReference>
<dbReference type="InterPro" id="IPR027417">
    <property type="entry name" value="P-loop_NTPase"/>
</dbReference>
<dbReference type="InterPro" id="IPR005225">
    <property type="entry name" value="Small_GTP-bd"/>
</dbReference>
<dbReference type="InterPro" id="IPR000795">
    <property type="entry name" value="T_Tr_GTP-bd_dom"/>
</dbReference>
<dbReference type="InterPro" id="IPR000178">
    <property type="entry name" value="TF_IF2_bacterial-like"/>
</dbReference>
<dbReference type="InterPro" id="IPR015760">
    <property type="entry name" value="TIF_IF2"/>
</dbReference>
<dbReference type="InterPro" id="IPR023115">
    <property type="entry name" value="TIF_IF2_dom3"/>
</dbReference>
<dbReference type="InterPro" id="IPR036925">
    <property type="entry name" value="TIF_IF2_dom3_sf"/>
</dbReference>
<dbReference type="InterPro" id="IPR009000">
    <property type="entry name" value="Transl_B-barrel_sf"/>
</dbReference>
<dbReference type="NCBIfam" id="TIGR00487">
    <property type="entry name" value="IF-2"/>
    <property type="match status" value="1"/>
</dbReference>
<dbReference type="NCBIfam" id="TIGR00231">
    <property type="entry name" value="small_GTP"/>
    <property type="match status" value="1"/>
</dbReference>
<dbReference type="PANTHER" id="PTHR43381:SF5">
    <property type="entry name" value="TR-TYPE G DOMAIN-CONTAINING PROTEIN"/>
    <property type="match status" value="1"/>
</dbReference>
<dbReference type="PANTHER" id="PTHR43381">
    <property type="entry name" value="TRANSLATION INITIATION FACTOR IF-2-RELATED"/>
    <property type="match status" value="1"/>
</dbReference>
<dbReference type="Pfam" id="PF22042">
    <property type="entry name" value="EF-G_D2"/>
    <property type="match status" value="1"/>
</dbReference>
<dbReference type="Pfam" id="PF00009">
    <property type="entry name" value="GTP_EFTU"/>
    <property type="match status" value="1"/>
</dbReference>
<dbReference type="Pfam" id="PF03144">
    <property type="entry name" value="GTP_EFTU_D2"/>
    <property type="match status" value="1"/>
</dbReference>
<dbReference type="Pfam" id="PF11987">
    <property type="entry name" value="IF-2"/>
    <property type="match status" value="1"/>
</dbReference>
<dbReference type="Pfam" id="PF08364">
    <property type="entry name" value="IF2_assoc"/>
    <property type="match status" value="1"/>
</dbReference>
<dbReference type="Pfam" id="PF04760">
    <property type="entry name" value="IF2_N"/>
    <property type="match status" value="1"/>
</dbReference>
<dbReference type="SUPFAM" id="SSF52156">
    <property type="entry name" value="Initiation factor IF2/eIF5b, domain 3"/>
    <property type="match status" value="1"/>
</dbReference>
<dbReference type="SUPFAM" id="SSF52540">
    <property type="entry name" value="P-loop containing nucleoside triphosphate hydrolases"/>
    <property type="match status" value="1"/>
</dbReference>
<dbReference type="SUPFAM" id="SSF50447">
    <property type="entry name" value="Translation proteins"/>
    <property type="match status" value="2"/>
</dbReference>
<dbReference type="PROSITE" id="PS51722">
    <property type="entry name" value="G_TR_2"/>
    <property type="match status" value="1"/>
</dbReference>
<dbReference type="PROSITE" id="PS01176">
    <property type="entry name" value="IF2"/>
    <property type="match status" value="1"/>
</dbReference>